<name>MGAT2_MOUSE</name>
<gene>
    <name type="primary">Mgat2</name>
</gene>
<accession>Q921V5</accession>
<accession>Q3U6X4</accession>
<accession>Q8C3Z6</accession>
<evidence type="ECO:0000250" key="1">
    <source>
        <dbReference type="UniProtKB" id="Q10469"/>
    </source>
</evidence>
<evidence type="ECO:0000255" key="2"/>
<evidence type="ECO:0000269" key="3">
    <source>
    </source>
</evidence>
<evidence type="ECO:0000305" key="4"/>
<sequence>MRFRIYKRKVLILTLVVAACGFVLWSSNGRQRKSDALGPPLLDAEPVRGAGHLAVSVGIRRVSNESAAPLVPAVPRPEVDNLTLRYRSLVYQLNFDQMLRNVGNDGTWSPGELVLVVQVHNRPEYLRLLIDSLRKAQGIQEVLVIFSHDFWSAEINSLISRVDFCPVLQVFFPFSIQLYPNEFPGSDPRDCPRDLKKNAALKLGCINAEYPDSFGHYREAKFSQTKHHWWWKLHFVWERVKVLQDYTGLILFLEEDHYLAPDFYHVFKKMWKLKQQECPGCDVLSLGTYTTIRSFYGIADKVDVKTWKSTEHNMGLALTRDAYQKLIECTDTFCTYDDYNWDWTLQYLTLACLPKIWKVLVPQAPRIFHAGDCGMHHKKTCRPSTQSAQIESLLNSNKQYLFPETLVIGEKFPMAAISPPRKNGGWGDIRDHELCKSYRRLQ</sequence>
<comment type="function">
    <text evidence="3">Plays an essential role in protein N-glycosylation. Catalyzes the transfer of N-acetylglucosamine (GlcNAc) onto the free terminal mannose moiety in the core structure of the nascent N-linked glycan chain, giving rise to the second branch in complex glycans.</text>
</comment>
<comment type="catalytic activity">
    <reaction evidence="1">
        <text>an N(4)-{beta-D-GlcNAc-(1-&gt;2)-alpha-D-Man-(1-&gt;3)-[alpha-D-Man-(1-&gt;6)]-beta-D-Man-(1-&gt;4)-beta-D-GlcNAc-(1-&gt;4)-beta-D-GlcNAc}-L-asparaginyl-[protein] + UDP-N-acetyl-alpha-D-glucosamine = N(4)-{beta-D-GlcNAc-(1-&gt;2)-alpha-D-Man-(1-&gt;3)-[beta-D-GlcNAc-(1-&gt;2)-alpha-D-Man-(1-&gt;6)]-beta-D-Man-(1-&gt;4)-beta-D-GlcNAc-(1-&gt;4)-beta-D-GlcNAc}-L-asparaginyl-[protein] + UDP + H(+)</text>
        <dbReference type="Rhea" id="RHEA:12941"/>
        <dbReference type="Rhea" id="RHEA-COMP:13526"/>
        <dbReference type="Rhea" id="RHEA-COMP:14369"/>
        <dbReference type="ChEBI" id="CHEBI:15378"/>
        <dbReference type="ChEBI" id="CHEBI:57705"/>
        <dbReference type="ChEBI" id="CHEBI:58223"/>
        <dbReference type="ChEBI" id="CHEBI:60615"/>
        <dbReference type="ChEBI" id="CHEBI:60651"/>
        <dbReference type="EC" id="2.4.1.143"/>
    </reaction>
</comment>
<comment type="cofactor">
    <cofactor evidence="1">
        <name>Mn(2+)</name>
        <dbReference type="ChEBI" id="CHEBI:29035"/>
    </cofactor>
</comment>
<comment type="pathway">
    <text evidence="1">Protein modification; protein glycosylation.</text>
</comment>
<comment type="subunit">
    <text evidence="1">Homodimer.</text>
</comment>
<comment type="subcellular location">
    <subcellularLocation>
        <location evidence="1">Golgi apparatus membrane</location>
        <topology evidence="1">Single-pass type II membrane protein</topology>
    </subcellularLocation>
</comment>
<comment type="tissue specificity">
    <text evidence="3">Detected in liver, lung, testis, kidney, brain, spleen, thymus, uterus and intestine.</text>
</comment>
<comment type="disruption phenotype">
    <text evidence="3">Decreased embryonic survival between 9 and 15 dpc. Surviving embryos are about 20% smaller than their littermates by 15 dpc. Most of the newborn pups die during the first week after birth, and none live longer than 4 weeks. Pups are about half the size of their littermates 8 days after birth, have dismorphic facial features and severe locomotor deficits. Pups display impaired muscle development and defects in bone development including a hunched spinal column, plus poorly calcified and brittle bones in vertebrae, ribs, femur and skull. Mutant mice have also mild anemia and impaired mucus production in the gastrointestinal system. Outcrossing increases the length of the lifespan, but does not increase the number of pups that survive after the fist week. Surviving males display testicular atrophy and are infertile. About one third of the surviving females produce offspring, but do not nurture their pups.</text>
</comment>
<comment type="similarity">
    <text evidence="4">Belongs to the glycosyltransferase 16 (GT16) protein family.</text>
</comment>
<organism>
    <name type="scientific">Mus musculus</name>
    <name type="common">Mouse</name>
    <dbReference type="NCBI Taxonomy" id="10090"/>
    <lineage>
        <taxon>Eukaryota</taxon>
        <taxon>Metazoa</taxon>
        <taxon>Chordata</taxon>
        <taxon>Craniata</taxon>
        <taxon>Vertebrata</taxon>
        <taxon>Euteleostomi</taxon>
        <taxon>Mammalia</taxon>
        <taxon>Eutheria</taxon>
        <taxon>Euarchontoglires</taxon>
        <taxon>Glires</taxon>
        <taxon>Rodentia</taxon>
        <taxon>Myomorpha</taxon>
        <taxon>Muroidea</taxon>
        <taxon>Muridae</taxon>
        <taxon>Murinae</taxon>
        <taxon>Mus</taxon>
        <taxon>Mus</taxon>
    </lineage>
</organism>
<feature type="chain" id="PRO_0000080518" description="Alpha-1,6-mannosyl-glycoprotein 2-beta-N-acetylglucosaminyltransferase">
    <location>
        <begin position="1"/>
        <end position="442"/>
    </location>
</feature>
<feature type="topological domain" description="Cytoplasmic" evidence="2">
    <location>
        <begin position="1"/>
        <end position="9"/>
    </location>
</feature>
<feature type="transmembrane region" description="Helical; Signal-anchor for type II membrane protein" evidence="2">
    <location>
        <begin position="10"/>
        <end position="29"/>
    </location>
</feature>
<feature type="topological domain" description="Lumenal" evidence="2">
    <location>
        <begin position="30"/>
        <end position="442"/>
    </location>
</feature>
<feature type="binding site" evidence="1">
    <location>
        <begin position="118"/>
        <end position="122"/>
    </location>
    <ligand>
        <name>substrate</name>
    </ligand>
</feature>
<feature type="binding site" evidence="1">
    <location>
        <position position="149"/>
    </location>
    <ligand>
        <name>substrate</name>
    </ligand>
</feature>
<feature type="binding site" evidence="1">
    <location>
        <begin position="224"/>
        <end position="228"/>
    </location>
    <ligand>
        <name>substrate</name>
    </ligand>
</feature>
<feature type="binding site" evidence="1">
    <location>
        <position position="256"/>
    </location>
    <ligand>
        <name>Mn(2+)</name>
        <dbReference type="ChEBI" id="CHEBI:29035"/>
    </ligand>
</feature>
<feature type="binding site" evidence="1">
    <location>
        <position position="293"/>
    </location>
    <ligand>
        <name>substrate</name>
    </ligand>
</feature>
<feature type="binding site" evidence="1">
    <location>
        <position position="369"/>
    </location>
    <ligand>
        <name>Mn(2+)</name>
        <dbReference type="ChEBI" id="CHEBI:29035"/>
    </ligand>
</feature>
<feature type="glycosylation site" description="N-linked (GlcNAc...) asparagine" evidence="2">
    <location>
        <position position="64"/>
    </location>
</feature>
<feature type="glycosylation site" description="N-linked (GlcNAc...) asparagine" evidence="2">
    <location>
        <position position="81"/>
    </location>
</feature>
<feature type="disulfide bond" evidence="1">
    <location>
        <begin position="191"/>
        <end position="205"/>
    </location>
</feature>
<feature type="disulfide bond" evidence="1">
    <location>
        <begin position="278"/>
        <end position="281"/>
    </location>
</feature>
<feature type="disulfide bond" evidence="1">
    <location>
        <begin position="329"/>
        <end position="352"/>
    </location>
</feature>
<feature type="disulfide bond" evidence="1">
    <location>
        <begin position="334"/>
        <end position="435"/>
    </location>
</feature>
<feature type="disulfide bond" evidence="1">
    <location>
        <begin position="373"/>
        <end position="381"/>
    </location>
</feature>
<feature type="sequence conflict" description="In Ref. 1; BAC38888." evidence="4" ref="1">
    <original>K</original>
    <variation>E</variation>
    <location>
        <position position="9"/>
    </location>
</feature>
<keyword id="KW-1015">Disulfide bond</keyword>
<keyword id="KW-0325">Glycoprotein</keyword>
<keyword id="KW-0328">Glycosyltransferase</keyword>
<keyword id="KW-0333">Golgi apparatus</keyword>
<keyword id="KW-0464">Manganese</keyword>
<keyword id="KW-0472">Membrane</keyword>
<keyword id="KW-0479">Metal-binding</keyword>
<keyword id="KW-1185">Reference proteome</keyword>
<keyword id="KW-0735">Signal-anchor</keyword>
<keyword id="KW-0808">Transferase</keyword>
<keyword id="KW-0812">Transmembrane</keyword>
<keyword id="KW-1133">Transmembrane helix</keyword>
<proteinExistence type="evidence at protein level"/>
<dbReference type="EC" id="2.4.1.143" evidence="1"/>
<dbReference type="EMBL" id="AK083370">
    <property type="protein sequence ID" value="BAC38888.1"/>
    <property type="molecule type" value="mRNA"/>
</dbReference>
<dbReference type="EMBL" id="AK152925">
    <property type="protein sequence ID" value="BAE31600.1"/>
    <property type="molecule type" value="mRNA"/>
</dbReference>
<dbReference type="EMBL" id="BC010583">
    <property type="protein sequence ID" value="AAH10583.1"/>
    <property type="molecule type" value="mRNA"/>
</dbReference>
<dbReference type="EMBL" id="BC027169">
    <property type="protein sequence ID" value="AAH27169.1"/>
    <property type="molecule type" value="mRNA"/>
</dbReference>
<dbReference type="CCDS" id="CCDS25947.1"/>
<dbReference type="RefSeq" id="NP_666147.1">
    <property type="nucleotide sequence ID" value="NM_146035.2"/>
</dbReference>
<dbReference type="SMR" id="Q921V5"/>
<dbReference type="BioGRID" id="229940">
    <property type="interactions" value="2"/>
</dbReference>
<dbReference type="FunCoup" id="Q921V5">
    <property type="interactions" value="1573"/>
</dbReference>
<dbReference type="STRING" id="10090.ENSMUSP00000057905"/>
<dbReference type="BindingDB" id="Q921V5"/>
<dbReference type="ChEMBL" id="CHEMBL2375203"/>
<dbReference type="CAZy" id="GT16">
    <property type="family name" value="Glycosyltransferase Family 16"/>
</dbReference>
<dbReference type="GlyCosmos" id="Q921V5">
    <property type="glycosylation" value="2 sites, No reported glycans"/>
</dbReference>
<dbReference type="GlyGen" id="Q921V5">
    <property type="glycosylation" value="2 sites, 1 N-linked glycan (1 site)"/>
</dbReference>
<dbReference type="PhosphoSitePlus" id="Q921V5"/>
<dbReference type="jPOST" id="Q921V5"/>
<dbReference type="PaxDb" id="10090-ENSMUSP00000057905"/>
<dbReference type="ProteomicsDB" id="295563"/>
<dbReference type="Pumba" id="Q921V5"/>
<dbReference type="Antibodypedia" id="10266">
    <property type="antibodies" value="160 antibodies from 24 providers"/>
</dbReference>
<dbReference type="DNASU" id="217664"/>
<dbReference type="Ensembl" id="ENSMUST00000060579.10">
    <property type="protein sequence ID" value="ENSMUSP00000057905.9"/>
    <property type="gene ID" value="ENSMUSG00000043998.11"/>
</dbReference>
<dbReference type="GeneID" id="217664"/>
<dbReference type="KEGG" id="mmu:217664"/>
<dbReference type="UCSC" id="uc011ymy.1">
    <property type="organism name" value="mouse"/>
</dbReference>
<dbReference type="AGR" id="MGI:2384966"/>
<dbReference type="CTD" id="4247"/>
<dbReference type="MGI" id="MGI:2384966">
    <property type="gene designation" value="Mgat2"/>
</dbReference>
<dbReference type="VEuPathDB" id="HostDB:ENSMUSG00000043998"/>
<dbReference type="eggNOG" id="KOG2791">
    <property type="taxonomic scope" value="Eukaryota"/>
</dbReference>
<dbReference type="GeneTree" id="ENSGT00390000007341"/>
<dbReference type="HOGENOM" id="CLU_032753_2_1_1"/>
<dbReference type="InParanoid" id="Q921V5"/>
<dbReference type="OMA" id="FWSAEIN"/>
<dbReference type="OrthoDB" id="6019616at2759"/>
<dbReference type="PhylomeDB" id="Q921V5"/>
<dbReference type="TreeFam" id="TF314772"/>
<dbReference type="Reactome" id="R-MMU-975578">
    <property type="pathway name" value="Reactions specific to the complex N-glycan synthesis pathway"/>
</dbReference>
<dbReference type="UniPathway" id="UPA00378"/>
<dbReference type="BioGRID-ORCS" id="217664">
    <property type="hits" value="8 hits in 78 CRISPR screens"/>
</dbReference>
<dbReference type="ChiTaRS" id="Mgat2">
    <property type="organism name" value="mouse"/>
</dbReference>
<dbReference type="PRO" id="PR:Q921V5"/>
<dbReference type="Proteomes" id="UP000000589">
    <property type="component" value="Chromosome 12"/>
</dbReference>
<dbReference type="RNAct" id="Q921V5">
    <property type="molecule type" value="protein"/>
</dbReference>
<dbReference type="Bgee" id="ENSMUSG00000043998">
    <property type="expression patterns" value="Expressed in parotid gland and 267 other cell types or tissues"/>
</dbReference>
<dbReference type="GO" id="GO:0000139">
    <property type="term" value="C:Golgi membrane"/>
    <property type="evidence" value="ECO:0000250"/>
    <property type="project" value="UniProtKB"/>
</dbReference>
<dbReference type="GO" id="GO:0005795">
    <property type="term" value="C:Golgi stack"/>
    <property type="evidence" value="ECO:0007669"/>
    <property type="project" value="InterPro"/>
</dbReference>
<dbReference type="GO" id="GO:0008455">
    <property type="term" value="F:alpha-1,6-mannosylglycoprotein 2-beta-N-acetylglucosaminyltransferase activity"/>
    <property type="evidence" value="ECO:0000315"/>
    <property type="project" value="MGI"/>
</dbReference>
<dbReference type="GO" id="GO:0030145">
    <property type="term" value="F:manganese ion binding"/>
    <property type="evidence" value="ECO:0000250"/>
    <property type="project" value="UniProtKB"/>
</dbReference>
<dbReference type="GO" id="GO:0042803">
    <property type="term" value="F:protein homodimerization activity"/>
    <property type="evidence" value="ECO:0000250"/>
    <property type="project" value="UniProtKB"/>
</dbReference>
<dbReference type="GO" id="GO:0009312">
    <property type="term" value="P:oligosaccharide biosynthetic process"/>
    <property type="evidence" value="ECO:0007669"/>
    <property type="project" value="InterPro"/>
</dbReference>
<dbReference type="GO" id="GO:0018279">
    <property type="term" value="P:protein N-linked glycosylation via asparagine"/>
    <property type="evidence" value="ECO:0000315"/>
    <property type="project" value="MGI"/>
</dbReference>
<dbReference type="Gene3D" id="3.90.550.10">
    <property type="entry name" value="Spore Coat Polysaccharide Biosynthesis Protein SpsA, Chain A"/>
    <property type="match status" value="1"/>
</dbReference>
<dbReference type="InterPro" id="IPR007754">
    <property type="entry name" value="GlcNAc_II"/>
</dbReference>
<dbReference type="InterPro" id="IPR029044">
    <property type="entry name" value="Nucleotide-diphossugar_trans"/>
</dbReference>
<dbReference type="PANTHER" id="PTHR12871:SF0">
    <property type="entry name" value="ALPHA-1,6-MANNOSYL-GLYCOPROTEIN 2-BETA-N-ACETYLGLUCOSAMINYLTRANSFERASE"/>
    <property type="match status" value="1"/>
</dbReference>
<dbReference type="PANTHER" id="PTHR12871">
    <property type="entry name" value="BETA-1,2-N-ACETYLGLUCOSAMINYLTRANSFERASE II"/>
    <property type="match status" value="1"/>
</dbReference>
<dbReference type="Pfam" id="PF05060">
    <property type="entry name" value="MGAT2"/>
    <property type="match status" value="1"/>
</dbReference>
<dbReference type="SUPFAM" id="SSF53448">
    <property type="entry name" value="Nucleotide-diphospho-sugar transferases"/>
    <property type="match status" value="1"/>
</dbReference>
<protein>
    <recommendedName>
        <fullName>Alpha-1,6-mannosyl-glycoprotein 2-beta-N-acetylglucosaminyltransferase</fullName>
        <ecNumber evidence="1">2.4.1.143</ecNumber>
    </recommendedName>
    <alternativeName>
        <fullName>Beta-1,2-N-acetylglucosaminyltransferase II</fullName>
    </alternativeName>
    <alternativeName>
        <fullName>GlcNAc-T II</fullName>
        <shortName>GNT-II</shortName>
    </alternativeName>
    <alternativeName>
        <fullName>Mannoside acetylglucosaminyltransferase 2</fullName>
    </alternativeName>
    <alternativeName>
        <fullName>N-glycosyl-oligosaccharide-glycoprotein N-acetylglucosaminyltransferase II</fullName>
    </alternativeName>
</protein>
<reference key="1">
    <citation type="journal article" date="2005" name="Science">
        <title>The transcriptional landscape of the mammalian genome.</title>
        <authorList>
            <person name="Carninci P."/>
            <person name="Kasukawa T."/>
            <person name="Katayama S."/>
            <person name="Gough J."/>
            <person name="Frith M.C."/>
            <person name="Maeda N."/>
            <person name="Oyama R."/>
            <person name="Ravasi T."/>
            <person name="Lenhard B."/>
            <person name="Wells C."/>
            <person name="Kodzius R."/>
            <person name="Shimokawa K."/>
            <person name="Bajic V.B."/>
            <person name="Brenner S.E."/>
            <person name="Batalov S."/>
            <person name="Forrest A.R."/>
            <person name="Zavolan M."/>
            <person name="Davis M.J."/>
            <person name="Wilming L.G."/>
            <person name="Aidinis V."/>
            <person name="Allen J.E."/>
            <person name="Ambesi-Impiombato A."/>
            <person name="Apweiler R."/>
            <person name="Aturaliya R.N."/>
            <person name="Bailey T.L."/>
            <person name="Bansal M."/>
            <person name="Baxter L."/>
            <person name="Beisel K.W."/>
            <person name="Bersano T."/>
            <person name="Bono H."/>
            <person name="Chalk A.M."/>
            <person name="Chiu K.P."/>
            <person name="Choudhary V."/>
            <person name="Christoffels A."/>
            <person name="Clutterbuck D.R."/>
            <person name="Crowe M.L."/>
            <person name="Dalla E."/>
            <person name="Dalrymple B.P."/>
            <person name="de Bono B."/>
            <person name="Della Gatta G."/>
            <person name="di Bernardo D."/>
            <person name="Down T."/>
            <person name="Engstrom P."/>
            <person name="Fagiolini M."/>
            <person name="Faulkner G."/>
            <person name="Fletcher C.F."/>
            <person name="Fukushima T."/>
            <person name="Furuno M."/>
            <person name="Futaki S."/>
            <person name="Gariboldi M."/>
            <person name="Georgii-Hemming P."/>
            <person name="Gingeras T.R."/>
            <person name="Gojobori T."/>
            <person name="Green R.E."/>
            <person name="Gustincich S."/>
            <person name="Harbers M."/>
            <person name="Hayashi Y."/>
            <person name="Hensch T.K."/>
            <person name="Hirokawa N."/>
            <person name="Hill D."/>
            <person name="Huminiecki L."/>
            <person name="Iacono M."/>
            <person name="Ikeo K."/>
            <person name="Iwama A."/>
            <person name="Ishikawa T."/>
            <person name="Jakt M."/>
            <person name="Kanapin A."/>
            <person name="Katoh M."/>
            <person name="Kawasawa Y."/>
            <person name="Kelso J."/>
            <person name="Kitamura H."/>
            <person name="Kitano H."/>
            <person name="Kollias G."/>
            <person name="Krishnan S.P."/>
            <person name="Kruger A."/>
            <person name="Kummerfeld S.K."/>
            <person name="Kurochkin I.V."/>
            <person name="Lareau L.F."/>
            <person name="Lazarevic D."/>
            <person name="Lipovich L."/>
            <person name="Liu J."/>
            <person name="Liuni S."/>
            <person name="McWilliam S."/>
            <person name="Madan Babu M."/>
            <person name="Madera M."/>
            <person name="Marchionni L."/>
            <person name="Matsuda H."/>
            <person name="Matsuzawa S."/>
            <person name="Miki H."/>
            <person name="Mignone F."/>
            <person name="Miyake S."/>
            <person name="Morris K."/>
            <person name="Mottagui-Tabar S."/>
            <person name="Mulder N."/>
            <person name="Nakano N."/>
            <person name="Nakauchi H."/>
            <person name="Ng P."/>
            <person name="Nilsson R."/>
            <person name="Nishiguchi S."/>
            <person name="Nishikawa S."/>
            <person name="Nori F."/>
            <person name="Ohara O."/>
            <person name="Okazaki Y."/>
            <person name="Orlando V."/>
            <person name="Pang K.C."/>
            <person name="Pavan W.J."/>
            <person name="Pavesi G."/>
            <person name="Pesole G."/>
            <person name="Petrovsky N."/>
            <person name="Piazza S."/>
            <person name="Reed J."/>
            <person name="Reid J.F."/>
            <person name="Ring B.Z."/>
            <person name="Ringwald M."/>
            <person name="Rost B."/>
            <person name="Ruan Y."/>
            <person name="Salzberg S.L."/>
            <person name="Sandelin A."/>
            <person name="Schneider C."/>
            <person name="Schoenbach C."/>
            <person name="Sekiguchi K."/>
            <person name="Semple C.A."/>
            <person name="Seno S."/>
            <person name="Sessa L."/>
            <person name="Sheng Y."/>
            <person name="Shibata Y."/>
            <person name="Shimada H."/>
            <person name="Shimada K."/>
            <person name="Silva D."/>
            <person name="Sinclair B."/>
            <person name="Sperling S."/>
            <person name="Stupka E."/>
            <person name="Sugiura K."/>
            <person name="Sultana R."/>
            <person name="Takenaka Y."/>
            <person name="Taki K."/>
            <person name="Tammoja K."/>
            <person name="Tan S.L."/>
            <person name="Tang S."/>
            <person name="Taylor M.S."/>
            <person name="Tegner J."/>
            <person name="Teichmann S.A."/>
            <person name="Ueda H.R."/>
            <person name="van Nimwegen E."/>
            <person name="Verardo R."/>
            <person name="Wei C.L."/>
            <person name="Yagi K."/>
            <person name="Yamanishi H."/>
            <person name="Zabarovsky E."/>
            <person name="Zhu S."/>
            <person name="Zimmer A."/>
            <person name="Hide W."/>
            <person name="Bult C."/>
            <person name="Grimmond S.M."/>
            <person name="Teasdale R.D."/>
            <person name="Liu E.T."/>
            <person name="Brusic V."/>
            <person name="Quackenbush J."/>
            <person name="Wahlestedt C."/>
            <person name="Mattick J.S."/>
            <person name="Hume D.A."/>
            <person name="Kai C."/>
            <person name="Sasaki D."/>
            <person name="Tomaru Y."/>
            <person name="Fukuda S."/>
            <person name="Kanamori-Katayama M."/>
            <person name="Suzuki M."/>
            <person name="Aoki J."/>
            <person name="Arakawa T."/>
            <person name="Iida J."/>
            <person name="Imamura K."/>
            <person name="Itoh M."/>
            <person name="Kato T."/>
            <person name="Kawaji H."/>
            <person name="Kawagashira N."/>
            <person name="Kawashima T."/>
            <person name="Kojima M."/>
            <person name="Kondo S."/>
            <person name="Konno H."/>
            <person name="Nakano K."/>
            <person name="Ninomiya N."/>
            <person name="Nishio T."/>
            <person name="Okada M."/>
            <person name="Plessy C."/>
            <person name="Shibata K."/>
            <person name="Shiraki T."/>
            <person name="Suzuki S."/>
            <person name="Tagami M."/>
            <person name="Waki K."/>
            <person name="Watahiki A."/>
            <person name="Okamura-Oho Y."/>
            <person name="Suzuki H."/>
            <person name="Kawai J."/>
            <person name="Hayashizaki Y."/>
        </authorList>
    </citation>
    <scope>NUCLEOTIDE SEQUENCE [LARGE SCALE MRNA]</scope>
    <source>
        <strain>C57BL/6J</strain>
        <tissue>Bone marrow</tissue>
    </source>
</reference>
<reference key="2">
    <citation type="journal article" date="2004" name="Genome Res.">
        <title>The status, quality, and expansion of the NIH full-length cDNA project: the Mammalian Gene Collection (MGC).</title>
        <authorList>
            <consortium name="The MGC Project Team"/>
        </authorList>
    </citation>
    <scope>NUCLEOTIDE SEQUENCE [LARGE SCALE MRNA]</scope>
    <source>
        <strain>FVB/N</strain>
        <tissue>Mammary tumor</tissue>
    </source>
</reference>
<reference key="3">
    <citation type="journal article" date="2001" name="Glycobiology">
        <title>Modeling human congenital disorder of glycosylation type IIa in the mouse: conservation of asparagine-linked glycan-dependent functions in mammalian physiology and insights into disease pathogenesis.</title>
        <authorList>
            <person name="Wang Y."/>
            <person name="Tan J."/>
            <person name="Sutton-Smith M."/>
            <person name="Ditto D."/>
            <person name="Panico M."/>
            <person name="Campbell R.M."/>
            <person name="Varki N.M."/>
            <person name="Long J.M."/>
            <person name="Jaeken J."/>
            <person name="Levinson S.R."/>
            <person name="Wynshaw-Boris A."/>
            <person name="Morris H.R."/>
            <person name="Le D."/>
            <person name="Dell A."/>
            <person name="Schachter H."/>
            <person name="Marth J.D."/>
        </authorList>
    </citation>
    <scope>FUNCTION</scope>
    <scope>DISRUPTION PHENOTYPE</scope>
    <scope>TISSUE SPECIFICITY</scope>
</reference>
<reference key="4">
    <citation type="journal article" date="2010" name="Cell">
        <title>A tissue-specific atlas of mouse protein phosphorylation and expression.</title>
        <authorList>
            <person name="Huttlin E.L."/>
            <person name="Jedrychowski M.P."/>
            <person name="Elias J.E."/>
            <person name="Goswami T."/>
            <person name="Rad R."/>
            <person name="Beausoleil S.A."/>
            <person name="Villen J."/>
            <person name="Haas W."/>
            <person name="Sowa M.E."/>
            <person name="Gygi S.P."/>
        </authorList>
    </citation>
    <scope>IDENTIFICATION BY MASS SPECTROMETRY [LARGE SCALE ANALYSIS]</scope>
    <source>
        <tissue>Kidney</tissue>
        <tissue>Pancreas</tissue>
        <tissue>Testis</tissue>
    </source>
</reference>